<keyword id="KW-0998">Cell outer membrane</keyword>
<keyword id="KW-0472">Membrane</keyword>
<keyword id="KW-0732">Signal</keyword>
<evidence type="ECO:0000250" key="1"/>
<evidence type="ECO:0000305" key="2"/>
<accession>O08237</accession>
<protein>
    <recommendedName>
        <fullName>Outer membrane protein Omp26La</fullName>
    </recommendedName>
</protein>
<comment type="subcellular location">
    <subcellularLocation>
        <location>Cell outer membrane</location>
    </subcellularLocation>
</comment>
<comment type="similarity">
    <text evidence="2">Belongs to the MipA/OmpV family.</text>
</comment>
<proteinExistence type="inferred from homology"/>
<organism>
    <name type="scientific">Vibrio anguillarum</name>
    <name type="common">Listonella anguillarum</name>
    <dbReference type="NCBI Taxonomy" id="55601"/>
    <lineage>
        <taxon>Bacteria</taxon>
        <taxon>Pseudomonadati</taxon>
        <taxon>Pseudomonadota</taxon>
        <taxon>Gammaproteobacteria</taxon>
        <taxon>Vibrionales</taxon>
        <taxon>Vibrionaceae</taxon>
        <taxon>Vibrio</taxon>
    </lineage>
</organism>
<dbReference type="EMBL" id="D86078">
    <property type="protein sequence ID" value="BAA13008.1"/>
    <property type="molecule type" value="Genomic_DNA"/>
</dbReference>
<dbReference type="RefSeq" id="WP_019282463.1">
    <property type="nucleotide sequence ID" value="NZ_CP023054.1"/>
</dbReference>
<dbReference type="STRING" id="55601.AA407_05100"/>
<dbReference type="GO" id="GO:0009279">
    <property type="term" value="C:cell outer membrane"/>
    <property type="evidence" value="ECO:0007669"/>
    <property type="project" value="UniProtKB-SubCell"/>
</dbReference>
<dbReference type="GO" id="GO:0009252">
    <property type="term" value="P:peptidoglycan biosynthetic process"/>
    <property type="evidence" value="ECO:0007669"/>
    <property type="project" value="TreeGrafter"/>
</dbReference>
<dbReference type="InterPro" id="IPR010583">
    <property type="entry name" value="MipA"/>
</dbReference>
<dbReference type="InterPro" id="IPR054915">
    <property type="entry name" value="OmpV"/>
</dbReference>
<dbReference type="NCBIfam" id="NF045789">
    <property type="entry name" value="OmpVVibrio"/>
    <property type="match status" value="1"/>
</dbReference>
<dbReference type="PANTHER" id="PTHR38776">
    <property type="entry name" value="MLTA-INTERACTING PROTEIN-RELATED"/>
    <property type="match status" value="1"/>
</dbReference>
<dbReference type="PANTHER" id="PTHR38776:SF1">
    <property type="entry name" value="MLTA-INTERACTING PROTEIN-RELATED"/>
    <property type="match status" value="1"/>
</dbReference>
<dbReference type="Pfam" id="PF06629">
    <property type="entry name" value="MipA"/>
    <property type="match status" value="1"/>
</dbReference>
<reference key="1">
    <citation type="submission" date="1996-06" db="EMBL/GenBank/DDBJ databases">
        <title>Outer membrane protein Omp26La of Listonella anguillarum is an oxytetracycline inducible lipocalin homologue.</title>
        <authorList>
            <person name="Suzuki S."/>
            <person name="Yasue K."/>
            <person name="Kusuda R."/>
        </authorList>
    </citation>
    <scope>NUCLEOTIDE SEQUENCE [GENOMIC DNA]</scope>
    <source>
        <strain>V-1212</strain>
    </source>
</reference>
<name>OMPV_VIBAN</name>
<feature type="signal peptide" evidence="1">
    <location>
        <begin position="1"/>
        <end position="19"/>
    </location>
</feature>
<feature type="chain" id="PRO_0000019094" description="Outer membrane protein Omp26La">
    <location>
        <begin position="20"/>
        <end position="257"/>
    </location>
</feature>
<sequence>MKKIALFITASLIAGNTLAAQTYIRNGNIYTHEGQWVAEVGAFGSTDLLKDQDKSYSALLNFGYHGEDLNADLTGINYRFFGNTGDVVNLGTYLTGSGVTYDQDSANSVKGMDKRKATIDLGLNADIALGDGTVSTYFQHDILNENKGYKTGVNYFHVIDLGAVDLVPFAGISYQSSDYNNYYFGVKDKEATAQRKAYHAGGDFSYNLGYKLAYPINDRWEITQTSSYTRLGSDVTNSPIVESANQWLVGATVAYHF</sequence>